<reference key="1">
    <citation type="journal article" date="1986" name="J. Mol. Biol.">
        <title>Sequence of the short unique region, short repeats, and part of the long repeats of human cytomegalovirus.</title>
        <authorList>
            <person name="Weston K.M."/>
            <person name="Barrell B.G."/>
        </authorList>
    </citation>
    <scope>NUCLEOTIDE SEQUENCE [GENOMIC DNA]</scope>
</reference>
<reference key="2">
    <citation type="journal article" date="1990" name="Curr. Top. Microbiol. Immunol.">
        <title>Analysis of the protein-coding content of the sequence of human cytomegalovirus strain AD169.</title>
        <authorList>
            <person name="Chee M.S."/>
            <person name="Bankier A.T."/>
            <person name="Beck S."/>
            <person name="Bohni R."/>
            <person name="Brown C.M."/>
            <person name="Cerny R."/>
            <person name="Horsnell T."/>
            <person name="Hutchison C.A. III"/>
            <person name="Kouzarides T."/>
            <person name="Martignetti J.A."/>
            <person name="Preddie E."/>
            <person name="Satchwell S.C."/>
            <person name="Tomlinson P."/>
            <person name="Weston K.M."/>
            <person name="Barrell B.G."/>
        </authorList>
    </citation>
    <scope>NUCLEOTIDE SEQUENCE [LARGE SCALE GENOMIC DNA]</scope>
</reference>
<reference key="3">
    <citation type="journal article" date="2003" name="J. Gen. Virol.">
        <title>The human cytomegalovirus genome revisited: comparison with the chimpanzee cytomegalovirus genome.</title>
        <authorList>
            <person name="Davison A.J."/>
            <person name="Dolan A."/>
            <person name="Akter P."/>
            <person name="Addison C."/>
            <person name="Dargan D.J."/>
            <person name="Alcendor D.J."/>
            <person name="McGeoch D.J."/>
            <person name="Hayward G.S."/>
        </authorList>
    </citation>
    <scope>GENOME REANNOTATION</scope>
</reference>
<reference key="4">
    <citation type="journal article" date="2003" name="J. Gen. Virol.">
        <authorList>
            <person name="Davison A.J."/>
            <person name="Dolan A."/>
            <person name="Akter P."/>
            <person name="Addison C."/>
            <person name="Dargan D.J."/>
            <person name="Alcendor D.J."/>
            <person name="McGeoch D.J."/>
            <person name="Hayward G.S."/>
        </authorList>
    </citation>
    <scope>ERRATUM OF PUBMED:12533697</scope>
</reference>
<reference key="5">
    <citation type="journal article" date="1996" name="Cell">
        <title>The human cytomegalovirus US11 gene product dislocates MHC class I heavy chains from the endoplasmic reticulum to the cytosol.</title>
        <authorList>
            <person name="Wiertz E.J.H.J."/>
            <person name="Jones T.R."/>
            <person name="Sun L."/>
            <person name="Bogyo M."/>
            <person name="Geuze H.J."/>
            <person name="Ploegh H.L."/>
        </authorList>
    </citation>
    <scope>FUNCTION</scope>
    <scope>SUBCELLULAR LOCATION</scope>
</reference>
<reference key="6">
    <citation type="journal article" date="1996" name="Proc. Natl. Acad. Sci. U.S.A.">
        <title>Human cytomegalovirus inhibits antigen presentation by a sequential multistep process.</title>
        <authorList>
            <person name="Ahn K."/>
            <person name="Angulo A."/>
            <person name="Ghazal P."/>
            <person name="Peterson P.A."/>
            <person name="Yang Y."/>
            <person name="Frueh K."/>
        </authorList>
    </citation>
    <scope>FUNCTION</scope>
    <scope>SUBCELLULAR LOCATION</scope>
    <scope>DEVELOPMENTAL STAGE</scope>
</reference>
<reference key="7">
    <citation type="journal article" date="2001" name="EMBO J.">
        <title>Signal peptide cleavage of a type I membrane protein, HCMV US11, is dependent on its membrane anchor.</title>
        <authorList>
            <person name="Rehm A."/>
            <person name="Stern P."/>
            <person name="Ploegh H.L."/>
            <person name="Tortorella D."/>
        </authorList>
    </citation>
    <scope>DELAYED CLEAVAGE OF SIGNAL PEPTIDE</scope>
    <scope>GLYCOSYLATION</scope>
</reference>
<reference key="8">
    <citation type="journal article" date="2002" name="Curr. Top. Microbiol. Immunol.">
        <title>The HCMV gene products US2 and US11 target MHC class I molecules for degradation in the cytosol.</title>
        <authorList>
            <person name="van der Wal F.J."/>
            <person name="Kikkert M."/>
            <person name="Wiertz E."/>
        </authorList>
    </citation>
    <scope>REVIEW ON FUNCTION</scope>
</reference>
<reference key="9">
    <citation type="journal article" date="2005" name="Biochem. Biophys. Res. Commun.">
        <title>Functional dissection of HCMV US11 in mediating the degradation of MHC class I molecules.</title>
        <authorList>
            <person name="Lee S.O."/>
            <person name="Hwang S."/>
            <person name="Park J."/>
            <person name="Park B."/>
            <person name="Jin B.S."/>
            <person name="Lee S."/>
            <person name="Kim E."/>
            <person name="Cho S."/>
            <person name="Kim Y."/>
            <person name="Cho K."/>
            <person name="Shin J."/>
            <person name="Ahn K."/>
        </authorList>
    </citation>
    <scope>FUNCTION</scope>
    <scope>MUTAGENESIS OF GLN-192</scope>
</reference>
<reference key="10">
    <citation type="journal article" date="2009" name="J. Biol. Chem.">
        <title>TRAM1 participates in human cytomegalovirus US2- and US11-mediated dislocation of an endoplasmic reticulum membrane glycoprotein.</title>
        <authorList>
            <person name="Oresic K."/>
            <person name="Ng C.L."/>
            <person name="Tortorella D."/>
        </authorList>
    </citation>
    <scope>FUNCTION</scope>
    <scope>INTERACTION WITH HOST TRAM1</scope>
</reference>
<dbReference type="EMBL" id="X17403">
    <property type="protein sequence ID" value="CAA35278.1"/>
    <property type="molecule type" value="Genomic_DNA"/>
</dbReference>
<dbReference type="EMBL" id="X04650">
    <property type="protein sequence ID" value="CAB37103.1"/>
    <property type="molecule type" value="Genomic_DNA"/>
</dbReference>
<dbReference type="EMBL" id="BK000394">
    <property type="protein sequence ID" value="DAA00199.1"/>
    <property type="molecule type" value="Genomic_DNA"/>
</dbReference>
<dbReference type="PIR" id="C27230">
    <property type="entry name" value="QQBEF3"/>
</dbReference>
<dbReference type="PDB" id="8FRT">
    <property type="method" value="X-ray"/>
    <property type="resolution" value="1.80 A"/>
    <property type="chains" value="A=17-43"/>
</dbReference>
<dbReference type="PDB" id="8FU4">
    <property type="method" value="X-ray"/>
    <property type="resolution" value="1.60 A"/>
    <property type="chains" value="C=24-32"/>
</dbReference>
<dbReference type="PDBsum" id="8FRT"/>
<dbReference type="PDBsum" id="8FU4"/>
<dbReference type="SMR" id="P09727"/>
<dbReference type="IntAct" id="P09727">
    <property type="interactions" value="1"/>
</dbReference>
<dbReference type="GlyCosmos" id="P09727">
    <property type="glycosylation" value="1 site, No reported glycans"/>
</dbReference>
<dbReference type="iPTMnet" id="P09727"/>
<dbReference type="Reactome" id="R-HSA-8866654">
    <property type="pathway name" value="E3 ubiquitin ligases ubiquitinate target proteins"/>
</dbReference>
<dbReference type="Proteomes" id="UP000008991">
    <property type="component" value="Segment"/>
</dbReference>
<dbReference type="Proteomes" id="UP000008992">
    <property type="component" value="Segment"/>
</dbReference>
<dbReference type="GO" id="GO:0044167">
    <property type="term" value="C:host cell endoplasmic reticulum membrane"/>
    <property type="evidence" value="ECO:0007669"/>
    <property type="project" value="UniProtKB-SubCell"/>
</dbReference>
<dbReference type="GO" id="GO:0016020">
    <property type="term" value="C:membrane"/>
    <property type="evidence" value="ECO:0007669"/>
    <property type="project" value="UniProtKB-KW"/>
</dbReference>
<dbReference type="GO" id="GO:0039588">
    <property type="term" value="P:symbiont-mediated suppression of host antigen processing and presentation"/>
    <property type="evidence" value="ECO:0000304"/>
    <property type="project" value="UniProtKB"/>
</dbReference>
<dbReference type="GO" id="GO:0046776">
    <property type="term" value="P:symbiont-mediated suppression of host antigen processing and presentation of peptide antigen via MHC class I"/>
    <property type="evidence" value="ECO:0007669"/>
    <property type="project" value="UniProtKB-KW"/>
</dbReference>
<dbReference type="InterPro" id="IPR012536">
    <property type="entry name" value="CMV_US"/>
</dbReference>
<dbReference type="Pfam" id="PF08001">
    <property type="entry name" value="CMV_US"/>
    <property type="match status" value="1"/>
</dbReference>
<organism>
    <name type="scientific">Human cytomegalovirus (strain AD169)</name>
    <name type="common">HHV-5</name>
    <name type="synonym">Human herpesvirus 5</name>
    <dbReference type="NCBI Taxonomy" id="10360"/>
    <lineage>
        <taxon>Viruses</taxon>
        <taxon>Duplodnaviria</taxon>
        <taxon>Heunggongvirae</taxon>
        <taxon>Peploviricota</taxon>
        <taxon>Herviviricetes</taxon>
        <taxon>Herpesvirales</taxon>
        <taxon>Orthoherpesviridae</taxon>
        <taxon>Betaherpesvirinae</taxon>
        <taxon>Cytomegalovirus</taxon>
        <taxon>Cytomegalovirus humanbeta5</taxon>
        <taxon>Human cytomegalovirus</taxon>
    </lineage>
</organism>
<proteinExistence type="evidence at protein level"/>
<organismHost>
    <name type="scientific">Homo sapiens</name>
    <name type="common">Human</name>
    <dbReference type="NCBI Taxonomy" id="9606"/>
</organismHost>
<accession>P09727</accession>
<accession>Q7M6I9</accession>
<gene>
    <name type="primary">US11</name>
</gene>
<sequence>MNLVMLILALWAPVAGSMPELSLTLFDEPPPLVETEPLPPLSDVSEYRVEYSEARCVLRSGGRLEALWTLRGNLSVPTPTPRVYYQTLEGYADRVPTPVEDVSESLVAKRYWLRDYRVPQRTKLVLFYFSPCHQCQTYYVECEPRCLVPWVPLWSSLEDIERLLFEDRRLMAYYALTIKSAQYTLMMVAVIQVFWGLYVKGWLHRHFPWMFSDQW</sequence>
<keyword id="KW-0002">3D-structure</keyword>
<keyword id="KW-1015">Disulfide bond</keyword>
<keyword id="KW-0244">Early protein</keyword>
<keyword id="KW-0325">Glycoprotein</keyword>
<keyword id="KW-1038">Host endoplasmic reticulum</keyword>
<keyword id="KW-1043">Host membrane</keyword>
<keyword id="KW-0945">Host-virus interaction</keyword>
<keyword id="KW-0393">Immunoglobulin domain</keyword>
<keyword id="KW-1080">Inhibition of host adaptive immune response by virus</keyword>
<keyword id="KW-1115">Inhibition of host MHC class I molecule presentation by virus</keyword>
<keyword id="KW-0426">Late protein</keyword>
<keyword id="KW-0472">Membrane</keyword>
<keyword id="KW-1185">Reference proteome</keyword>
<keyword id="KW-0732">Signal</keyword>
<keyword id="KW-0812">Transmembrane</keyword>
<keyword id="KW-1133">Transmembrane helix</keyword>
<keyword id="KW-0899">Viral immunoevasion</keyword>
<protein>
    <recommendedName>
        <fullName>Unique short US11 glycoprotein</fullName>
    </recommendedName>
    <alternativeName>
        <fullName>Protein HXLF1</fullName>
    </alternativeName>
    <alternativeName>
        <fullName>gpUS11</fullName>
    </alternativeName>
</protein>
<feature type="signal peptide" description="Partially cleaved">
    <location>
        <begin position="1"/>
        <end position="17"/>
    </location>
</feature>
<feature type="chain" id="PRO_0000037444" description="Unique short US11 glycoprotein">
    <location>
        <begin position="18"/>
        <end position="215"/>
    </location>
</feature>
<feature type="topological domain" description="Lumenal" evidence="2">
    <location>
        <begin position="18"/>
        <end position="182"/>
    </location>
</feature>
<feature type="transmembrane region" description="Helical" evidence="2">
    <location>
        <begin position="183"/>
        <end position="203"/>
    </location>
</feature>
<feature type="topological domain" description="Cytoplasmic" evidence="2">
    <location>
        <begin position="204"/>
        <end position="215"/>
    </location>
</feature>
<feature type="domain" description="Ig-like H-type">
    <location>
        <begin position="47"/>
        <end position="146"/>
    </location>
</feature>
<feature type="glycosylation site" description="N-linked (GlcNAc...) asparagine; by host" evidence="9">
    <location>
        <position position="73"/>
    </location>
</feature>
<feature type="disulfide bond" evidence="1">
    <location>
        <begin position="56"/>
        <end position="142"/>
    </location>
</feature>
<feature type="mutagenesis site" description="Loss of the capacity to induce the degradation of MHC class I molecules." evidence="4">
    <original>Q</original>
    <variation>V</variation>
    <location>
        <position position="192"/>
    </location>
</feature>
<comment type="function">
    <text evidence="4 5 6 7">Participates in the inhibition of the host immune response. Redirects newly synthesized major histocompatibility complex (MHC) class I heavy chains via the SEC61 translocon to the cytosol where they undergo proteasome-dependent destruction. In consequence, infected cells are masked for immune recognition by cytotoxic T-lymphocytes.</text>
</comment>
<comment type="subunit">
    <text evidence="5">Interacts with host TRAM1.</text>
</comment>
<comment type="subcellular location">
    <subcellularLocation>
        <location evidence="6 7">Host endoplasmic reticulum membrane</location>
        <topology evidence="6 7">Single-pass type I membrane protein</topology>
    </subcellularLocation>
</comment>
<comment type="developmental stage">
    <text evidence="7">Expressed at early and late period of virus infection.</text>
</comment>
<comment type="PTM">
    <text evidence="3">N-glycosylated.</text>
</comment>
<comment type="PTM">
    <text evidence="3">A fraction of newly synthesized molecules retain the signal peptide after the N-linked glycan has been attached and translation of the polypeptide has been completed. Delayed cleavage of the signal peptide is determined by the first four residues, as well as by the transmembrane region.</text>
</comment>
<comment type="similarity">
    <text evidence="8">Belongs to the cytomegalovirus US6 family.</text>
</comment>
<name>US11_HCMVA</name>
<evidence type="ECO:0000250" key="1"/>
<evidence type="ECO:0000255" key="2"/>
<evidence type="ECO:0000269" key="3">
    <source>
    </source>
</evidence>
<evidence type="ECO:0000269" key="4">
    <source>
    </source>
</evidence>
<evidence type="ECO:0000269" key="5">
    <source>
    </source>
</evidence>
<evidence type="ECO:0000269" key="6">
    <source>
    </source>
</evidence>
<evidence type="ECO:0000269" key="7">
    <source>
    </source>
</evidence>
<evidence type="ECO:0000305" key="8"/>
<evidence type="ECO:0000305" key="9">
    <source>
    </source>
</evidence>